<organism>
    <name type="scientific">Pithecopus azureus</name>
    <name type="common">Orange-legged monkey tree frog</name>
    <name type="synonym">Phyllomedusa azurea</name>
    <dbReference type="NCBI Taxonomy" id="2034991"/>
    <lineage>
        <taxon>Eukaryota</taxon>
        <taxon>Metazoa</taxon>
        <taxon>Chordata</taxon>
        <taxon>Craniata</taxon>
        <taxon>Vertebrata</taxon>
        <taxon>Euteleostomi</taxon>
        <taxon>Amphibia</taxon>
        <taxon>Batrachia</taxon>
        <taxon>Anura</taxon>
        <taxon>Neobatrachia</taxon>
        <taxon>Hyloidea</taxon>
        <taxon>Hylidae</taxon>
        <taxon>Phyllomedusinae</taxon>
        <taxon>Pithecopus</taxon>
    </lineage>
</organism>
<sequence>VPPGFTPFRQS</sequence>
<feature type="peptide" id="PRO_0000250426" description="[Val1,Hyp2,Thr6]-bradykinyl-Gln,Ser" evidence="2">
    <location>
        <begin position="1"/>
        <end position="11"/>
    </location>
</feature>
<feature type="modified residue" description="4-hydroxyproline" evidence="2">
    <location>
        <position position="2"/>
    </location>
</feature>
<comment type="function">
    <text evidence="1">May produce in vitro relaxation of rat arterial smooth muscle and constriction of intestinal smooth muscle (By similarity). May target bradykinin receptors (BDKRB).</text>
</comment>
<comment type="subcellular location">
    <subcellularLocation>
        <location evidence="2">Secreted</location>
    </subcellularLocation>
</comment>
<comment type="tissue specificity">
    <text evidence="2">Expressed by the skin glands.</text>
</comment>
<comment type="mass spectrometry"/>
<comment type="similarity">
    <text evidence="4">Belongs to the bradykinin-related peptide family.</text>
</comment>
<name>BRK3_PITAZ</name>
<accession>P84935</accession>
<dbReference type="GO" id="GO:0005576">
    <property type="term" value="C:extracellular region"/>
    <property type="evidence" value="ECO:0007669"/>
    <property type="project" value="UniProtKB-SubCell"/>
</dbReference>
<dbReference type="GO" id="GO:0005179">
    <property type="term" value="F:hormone activity"/>
    <property type="evidence" value="ECO:0007669"/>
    <property type="project" value="InterPro"/>
</dbReference>
<dbReference type="GO" id="GO:0090729">
    <property type="term" value="F:toxin activity"/>
    <property type="evidence" value="ECO:0007669"/>
    <property type="project" value="UniProtKB-KW"/>
</dbReference>
<dbReference type="GO" id="GO:0006952">
    <property type="term" value="P:defense response"/>
    <property type="evidence" value="ECO:0007669"/>
    <property type="project" value="UniProtKB-KW"/>
</dbReference>
<dbReference type="GO" id="GO:0042311">
    <property type="term" value="P:vasodilation"/>
    <property type="evidence" value="ECO:0007669"/>
    <property type="project" value="UniProtKB-KW"/>
</dbReference>
<dbReference type="InterPro" id="IPR009608">
    <property type="entry name" value="Bradykinin"/>
</dbReference>
<dbReference type="Pfam" id="PF06753">
    <property type="entry name" value="Bradykinin"/>
    <property type="match status" value="1"/>
</dbReference>
<reference evidence="4" key="1">
    <citation type="journal article" date="2006" name="Rapid Commun. Mass Spectrom.">
        <title>Bradykinin-related peptides from Phyllomedusa hypochondrialis azurea: Mass spectrometric structural characterisation and cloning of precursor cDNAs.</title>
        <authorList>
            <person name="Thompson A.H."/>
            <person name="Bjourson A.J."/>
            <person name="Shaw C."/>
            <person name="McClean S."/>
        </authorList>
    </citation>
    <scope>PROTEIN SEQUENCE</scope>
    <scope>SUBCELLULAR LOCATION</scope>
    <scope>TISSUE SPECIFICITY</scope>
    <scope>MASS SPECTROMETRY</scope>
    <scope>HYDROXYLATION AT PRO-2</scope>
    <source>
        <tissue evidence="2">Skin secretion</tissue>
    </source>
</reference>
<evidence type="ECO:0000250" key="1"/>
<evidence type="ECO:0000269" key="2">
    <source>
    </source>
</evidence>
<evidence type="ECO:0000303" key="3">
    <source>
    </source>
</evidence>
<evidence type="ECO:0000305" key="4"/>
<protein>
    <recommendedName>
        <fullName evidence="3">[Val1,Hyp2,Thr6]-bradykinyl-Gln,Ser</fullName>
    </recommendedName>
    <alternativeName>
        <fullName evidence="3">[Val1,Hyp2,Thr6]-bradykinin-Gln,Ser</fullName>
    </alternativeName>
</protein>
<proteinExistence type="evidence at protein level"/>
<keyword id="KW-0878">Amphibian defense peptide</keyword>
<keyword id="KW-0903">Direct protein sequencing</keyword>
<keyword id="KW-1213">G-protein coupled receptor impairing toxin</keyword>
<keyword id="KW-0379">Hydroxylation</keyword>
<keyword id="KW-0964">Secreted</keyword>
<keyword id="KW-0800">Toxin</keyword>
<keyword id="KW-0838">Vasoactive</keyword>
<keyword id="KW-0840">Vasodilator</keyword>